<name>SLAM1_NEIMB</name>
<evidence type="ECO:0000255" key="1"/>
<evidence type="ECO:0000269" key="2">
    <source>
    </source>
</evidence>
<evidence type="ECO:0000269" key="3">
    <source>
    </source>
</evidence>
<evidence type="ECO:0000303" key="4">
    <source>
    </source>
</evidence>
<evidence type="ECO:0000305" key="5"/>
<evidence type="ECO:0000305" key="6">
    <source>
    </source>
</evidence>
<evidence type="ECO:0000305" key="7">
    <source>
    </source>
</evidence>
<proteinExistence type="evidence at protein level"/>
<reference key="1">
    <citation type="journal article" date="2000" name="Science">
        <title>Complete genome sequence of Neisseria meningitidis serogroup B strain MC58.</title>
        <authorList>
            <person name="Tettelin H."/>
            <person name="Saunders N.J."/>
            <person name="Heidelberg J.F."/>
            <person name="Jeffries A.C."/>
            <person name="Nelson K.E."/>
            <person name="Eisen J.A."/>
            <person name="Ketchum K.A."/>
            <person name="Hood D.W."/>
            <person name="Peden J.F."/>
            <person name="Dodson R.J."/>
            <person name="Nelson W.C."/>
            <person name="Gwinn M.L."/>
            <person name="DeBoy R.T."/>
            <person name="Peterson J.D."/>
            <person name="Hickey E.K."/>
            <person name="Haft D.H."/>
            <person name="Salzberg S.L."/>
            <person name="White O."/>
            <person name="Fleischmann R.D."/>
            <person name="Dougherty B.A."/>
            <person name="Mason T.M."/>
            <person name="Ciecko A."/>
            <person name="Parksey D.S."/>
            <person name="Blair E."/>
            <person name="Cittone H."/>
            <person name="Clark E.B."/>
            <person name="Cotton M.D."/>
            <person name="Utterback T.R."/>
            <person name="Khouri H.M."/>
            <person name="Qin H."/>
            <person name="Vamathevan J.J."/>
            <person name="Gill J."/>
            <person name="Scarlato V."/>
            <person name="Masignani V."/>
            <person name="Pizza M."/>
            <person name="Grandi G."/>
            <person name="Sun L."/>
            <person name="Smith H.O."/>
            <person name="Fraser C.M."/>
            <person name="Moxon E.R."/>
            <person name="Rappuoli R."/>
            <person name="Venter J.C."/>
        </authorList>
    </citation>
    <scope>NUCLEOTIDE SEQUENCE [LARGE SCALE GENOMIC DNA]</scope>
    <source>
        <strain>ATCC BAA-335 / MC58</strain>
    </source>
</reference>
<reference key="2">
    <citation type="journal article" date="2005" name="Hum. Vaccin.">
        <title>Characterization of the protein content of a meningococcal outer membrane vesicle vaccine by polyacrylamide gel electrophoresis and mass spectrometry.</title>
        <authorList>
            <person name="Vipond C."/>
            <person name="Wheeler J.X."/>
            <person name="Jones C."/>
            <person name="Feavers I.M."/>
            <person name="Suker J."/>
        </authorList>
    </citation>
    <scope>IDENTIFICATION BY MASS SPECTROMETRY [LARGE SCALE ANALYSIS]</scope>
</reference>
<reference key="3">
    <citation type="journal article" date="2016" name="Nat. Microbiol.">
        <title>Slam is an outer membrane protein that is required for the surface display of lipidated virulence factors in Neisseria.</title>
        <authorList>
            <person name="Hooda Y."/>
            <person name="Lai C.C."/>
            <person name="Judd A."/>
            <person name="Buckwalter C.M."/>
            <person name="Shin H.E."/>
            <person name="Gray-Owen S.D."/>
            <person name="Moraes T.F."/>
        </authorList>
    </citation>
    <scope>FUNCTION</scope>
    <scope>INTERACTION WITH TBPB</scope>
    <scope>SUBUNIT</scope>
    <scope>SUBCELLULAR LOCATION</scope>
    <scope>DOMAIN</scope>
    <scope>DISRUPTION PHENOTYPE</scope>
    <source>
        <strain>ATCC BAA-335 / MC58</strain>
        <strain>CCUG 37603 / B16B6 / Serogroup B / Serotype 2a</strain>
    </source>
</reference>
<keyword id="KW-0998">Cell outer membrane</keyword>
<keyword id="KW-0472">Membrane</keyword>
<keyword id="KW-1185">Reference proteome</keyword>
<keyword id="KW-0677">Repeat</keyword>
<keyword id="KW-0732">Signal</keyword>
<keyword id="KW-0802">TPR repeat</keyword>
<keyword id="KW-0812">Transmembrane</keyword>
<keyword id="KW-1134">Transmembrane beta strand</keyword>
<keyword id="KW-0843">Virulence</keyword>
<accession>Q9K165</accession>
<protein>
    <recommendedName>
        <fullName evidence="4">Surface lipoprotein assembly modifier 1</fullName>
        <shortName evidence="4">Slam1</shortName>
    </recommendedName>
    <alternativeName>
        <fullName>TPR repeat-containing protein NMB0313</fullName>
    </alternativeName>
</protein>
<organism>
    <name type="scientific">Neisseria meningitidis serogroup B (strain ATCC BAA-335 / MC58)</name>
    <dbReference type="NCBI Taxonomy" id="122586"/>
    <lineage>
        <taxon>Bacteria</taxon>
        <taxon>Pseudomonadati</taxon>
        <taxon>Pseudomonadota</taxon>
        <taxon>Betaproteobacteria</taxon>
        <taxon>Neisseriales</taxon>
        <taxon>Neisseriaceae</taxon>
        <taxon>Neisseria</taxon>
    </lineage>
</organism>
<dbReference type="EMBL" id="AE002098">
    <property type="protein sequence ID" value="AAF40758.1"/>
    <property type="molecule type" value="Genomic_DNA"/>
</dbReference>
<dbReference type="PIR" id="G81213">
    <property type="entry name" value="G81213"/>
</dbReference>
<dbReference type="RefSeq" id="NP_273362.1">
    <property type="nucleotide sequence ID" value="NC_003112.2"/>
</dbReference>
<dbReference type="RefSeq" id="WP_010980777.1">
    <property type="nucleotide sequence ID" value="NC_003112.2"/>
</dbReference>
<dbReference type="SMR" id="Q9K165"/>
<dbReference type="STRING" id="122586.NMB0313"/>
<dbReference type="PaxDb" id="122586-NMB0313"/>
<dbReference type="KEGG" id="nme:NMB0313"/>
<dbReference type="PATRIC" id="fig|122586.8.peg.396"/>
<dbReference type="HOGENOM" id="CLU_034927_1_0_4"/>
<dbReference type="InParanoid" id="Q9K165"/>
<dbReference type="OrthoDB" id="8606547at2"/>
<dbReference type="Proteomes" id="UP000000425">
    <property type="component" value="Chromosome"/>
</dbReference>
<dbReference type="GO" id="GO:0009279">
    <property type="term" value="C:cell outer membrane"/>
    <property type="evidence" value="ECO:0007669"/>
    <property type="project" value="UniProtKB-SubCell"/>
</dbReference>
<dbReference type="Gene3D" id="1.25.40.10">
    <property type="entry name" value="Tetratricopeptide repeat domain"/>
    <property type="match status" value="1"/>
</dbReference>
<dbReference type="InterPro" id="IPR007655">
    <property type="entry name" value="Slam_C_b-barrel"/>
</dbReference>
<dbReference type="InterPro" id="IPR011990">
    <property type="entry name" value="TPR-like_helical_dom_sf"/>
</dbReference>
<dbReference type="Pfam" id="PF04575">
    <property type="entry name" value="SlipAM"/>
    <property type="match status" value="1"/>
</dbReference>
<dbReference type="Pfam" id="PF24575">
    <property type="entry name" value="TPR_Slam"/>
    <property type="match status" value="1"/>
</dbReference>
<dbReference type="SUPFAM" id="SSF48452">
    <property type="entry name" value="TPR-like"/>
    <property type="match status" value="1"/>
</dbReference>
<dbReference type="PROSITE" id="PS50293">
    <property type="entry name" value="TPR_REGION"/>
    <property type="match status" value="1"/>
</dbReference>
<comment type="function">
    <text evidence="3">Required for correct export to the cell surface of some cell outer membrane lipoproteins both in Neisseria and heterologously in E.coli.</text>
</comment>
<comment type="subunit">
    <text evidence="3">Interacts with the C-terminal domain of surface lipoprotein TbpB.</text>
</comment>
<comment type="subcellular location">
    <subcellularLocation>
        <location evidence="3 6">Cell outer membrane</location>
        <topology evidence="1">Multi-pass membrane protein</topology>
    </subcellularLocation>
</comment>
<comment type="domain">
    <text evidence="3 7">Consists of a soluble N-terminal domain and C-terminal probable beta-barrel in the outer membrane with 14 predicted beta-strands (Probable). Expression of just the C-terminal domain restores about 30% levels of TbpB lipoprotein and nearly 100% levels of fHbp lipoprotein on the cell surface in strains B16B6 and MC58, and confers surface expression of lipoproteins TbpB, LbpB and fHbp, but not HpuA in E.coli (PubMed:27572441).</text>
</comment>
<comment type="disruption phenotype">
    <text evidence="3">Does not surface present lipoproteins TbpB, LbpB or fHbp (in strains B16B6 and MC58). Bacteria are considerably less virulent in mouse sepsis model (shown in strain B16B6 only).</text>
</comment>
<comment type="miscellaneous">
    <text evidence="2">Present in outer membrane vesicle formulations which are used as vaccines in human.</text>
</comment>
<comment type="similarity">
    <text evidence="5">Belongs to the Slam family.</text>
</comment>
<sequence>MVIFYFCGKTFMPARNRWMLLLPLLASAAYAEETPREPDLRSRPEFRLHEAEVKPIDREKVPGQVREKGKVLQIDGETLLKNPELLSRAMYSAVVSNNIAGIRVILPIYLQQAQQDKMLALYAQGILAQADGRVKEAISHYRELIAAQPDAPAVRMRLAAALFENRQNEAAADQFDRLKAENLPPQLMEQVELYRKALRERDAWKVNGGFSVTREHNINQAPKRQQYGKWTFPKQVDGTAVNYRLGAEKKWSLKNGWYTTAGGDVSGRVYPGNKKFNDMTAGVSGGIGFADRRKDAGLAVFHERRTYGNDAYSYTNGARLYFNRWQTPKWQTLSSAEWGRLKNTRRARSDNTHLQISNSLVFYRNARQYWMGGLDFYRERNPADRGDNFNRYGLRFAWGQEWGGSGLSSLLRLGAAKRHYEKPGFFSGFKGERRRDKELNTSLSLWHRALHFKGITPRLTLSHRETRSNDVFNEYEKNRAFVEFNKTF</sequence>
<feature type="signal peptide" evidence="1">
    <location>
        <begin position="1"/>
        <end position="31"/>
    </location>
</feature>
<feature type="chain" id="PRO_0000320328" description="Surface lipoprotein assembly modifier 1" evidence="1">
    <location>
        <begin position="32"/>
        <end position="488"/>
    </location>
</feature>
<feature type="transmembrane region" description="Beta stranded" evidence="1">
    <location>
        <begin position="204"/>
        <end position="214"/>
    </location>
</feature>
<feature type="transmembrane region" description="Beta stranded" evidence="1">
    <location>
        <begin position="241"/>
        <end position="252"/>
    </location>
</feature>
<feature type="transmembrane region" description="Beta stranded" evidence="1">
    <location>
        <begin position="257"/>
        <end position="267"/>
    </location>
</feature>
<feature type="transmembrane region" description="Beta stranded" evidence="1">
    <location>
        <begin position="280"/>
        <end position="291"/>
    </location>
</feature>
<feature type="transmembrane region" description="Beta stranded" evidence="1">
    <location>
        <begin position="294"/>
        <end position="304"/>
    </location>
</feature>
<feature type="transmembrane region" description="Beta stranded" evidence="1">
    <location>
        <begin position="316"/>
        <end position="325"/>
    </location>
</feature>
<feature type="transmembrane region" description="Beta stranded" evidence="1">
    <location>
        <begin position="330"/>
        <end position="340"/>
    </location>
</feature>
<feature type="transmembrane region" description="Beta stranded" evidence="1">
    <location>
        <begin position="354"/>
        <end position="364"/>
    </location>
</feature>
<feature type="transmembrane region" description="Beta stranded" evidence="1">
    <location>
        <begin position="368"/>
        <end position="377"/>
    </location>
</feature>
<feature type="transmembrane region" description="Beta stranded" evidence="1">
    <location>
        <begin position="393"/>
        <end position="402"/>
    </location>
</feature>
<feature type="transmembrane region" description="Beta stranded" evidence="1">
    <location>
        <begin position="407"/>
        <end position="417"/>
    </location>
</feature>
<feature type="transmembrane region" description="Beta stranded" evidence="1">
    <location>
        <begin position="439"/>
        <end position="448"/>
    </location>
</feature>
<feature type="transmembrane region" description="Beta stranded" evidence="1">
    <location>
        <begin position="455"/>
        <end position="464"/>
    </location>
</feature>
<feature type="transmembrane region" description="Beta stranded" evidence="1">
    <location>
        <begin position="478"/>
        <end position="488"/>
    </location>
</feature>
<feature type="repeat" description="TPR 1" evidence="1">
    <location>
        <begin position="118"/>
        <end position="151"/>
    </location>
</feature>
<feature type="repeat" description="TPR 2" evidence="1">
    <location>
        <begin position="171"/>
        <end position="204"/>
    </location>
</feature>
<feature type="region of interest" description="N-terminal domain" evidence="4">
    <location>
        <begin position="32"/>
        <end position="202"/>
    </location>
</feature>
<feature type="region of interest" description="C-terminal probable beta barrel, partially restores export of lipoproteins" evidence="4">
    <location>
        <begin position="203"/>
        <end position="488"/>
    </location>
</feature>
<gene>
    <name type="ordered locus">NMB0313</name>
</gene>